<name>MED21_COCIM</name>
<evidence type="ECO:0000250" key="1"/>
<evidence type="ECO:0000255" key="2"/>
<evidence type="ECO:0000256" key="3">
    <source>
        <dbReference type="SAM" id="MobiDB-lite"/>
    </source>
</evidence>
<evidence type="ECO:0000305" key="4"/>
<protein>
    <recommendedName>
        <fullName>Mediator of RNA polymerase II transcription subunit 21</fullName>
    </recommendedName>
    <alternativeName>
        <fullName>Mediator complex subunit 21</fullName>
    </alternativeName>
</protein>
<gene>
    <name type="primary">SRB7</name>
    <name type="synonym">MED21</name>
    <name type="ORF">CIMG_05041</name>
</gene>
<feature type="chain" id="PRO_0000305962" description="Mediator of RNA polymerase II transcription subunit 21">
    <location>
        <begin position="1"/>
        <end position="197"/>
    </location>
</feature>
<feature type="region of interest" description="Disordered" evidence="3">
    <location>
        <begin position="37"/>
        <end position="112"/>
    </location>
</feature>
<feature type="coiled-coil region" evidence="2">
    <location>
        <begin position="140"/>
        <end position="183"/>
    </location>
</feature>
<feature type="compositionally biased region" description="Low complexity" evidence="3">
    <location>
        <begin position="60"/>
        <end position="70"/>
    </location>
</feature>
<feature type="compositionally biased region" description="Low complexity" evidence="3">
    <location>
        <begin position="90"/>
        <end position="100"/>
    </location>
</feature>
<sequence length="197" mass="21274">MADILTQLQTCLDQLATQFYATVAYLTTYHDHSPAIPPPSVPSAVPQLKKIPKNPPPAAPTSGTATNTPGAAGGPSGDTKDAAAGPSNAPQMQQQHQEQPPDAPPRPDSPNTFLMRQRELARDLIIKEQQIEYLISVLPGIKSSEAEQQERIKQLAEELRVVEEERSARRRELRRLGEKVDGLLGAVSRGTGISNSG</sequence>
<accession>Q1DXC2</accession>
<accession>A0A0D6K9P6</accession>
<accession>J3KFB1</accession>
<proteinExistence type="inferred from homology"/>
<organism>
    <name type="scientific">Coccidioides immitis (strain RS)</name>
    <name type="common">Valley fever fungus</name>
    <dbReference type="NCBI Taxonomy" id="246410"/>
    <lineage>
        <taxon>Eukaryota</taxon>
        <taxon>Fungi</taxon>
        <taxon>Dikarya</taxon>
        <taxon>Ascomycota</taxon>
        <taxon>Pezizomycotina</taxon>
        <taxon>Eurotiomycetes</taxon>
        <taxon>Eurotiomycetidae</taxon>
        <taxon>Onygenales</taxon>
        <taxon>Onygenaceae</taxon>
        <taxon>Coccidioides</taxon>
    </lineage>
</organism>
<comment type="function">
    <text evidence="1">Component of the Mediator complex, a coactivator involved in the regulated transcription of nearly all RNA polymerase II-dependent genes. Mediator functions as a bridge to convey information from gene-specific regulatory proteins to the basal RNA polymerase II transcription machinery. Mediator is recruited to promoters by direct interactions with regulatory proteins and serves as a scaffold for the assembly of a functional preinitiation complex with RNA polymerase II and the general transcription factors (By similarity).</text>
</comment>
<comment type="subunit">
    <text evidence="1">Component of the Mediator complex.</text>
</comment>
<comment type="subcellular location">
    <subcellularLocation>
        <location evidence="1">Nucleus</location>
    </subcellularLocation>
</comment>
<comment type="similarity">
    <text evidence="4">Belongs to the Mediator complex subunit 21 family.</text>
</comment>
<comment type="sequence caution" evidence="4">
    <conflict type="erroneous initiation">
        <sequence resource="EMBL-CDS" id="EAS34017"/>
    </conflict>
    <text>Extended N-terminus.</text>
</comment>
<keyword id="KW-0010">Activator</keyword>
<keyword id="KW-0175">Coiled coil</keyword>
<keyword id="KW-0539">Nucleus</keyword>
<keyword id="KW-1185">Reference proteome</keyword>
<keyword id="KW-0804">Transcription</keyword>
<keyword id="KW-0805">Transcription regulation</keyword>
<reference key="1">
    <citation type="journal article" date="2009" name="Genome Res.">
        <title>Comparative genomic analyses of the human fungal pathogens Coccidioides and their relatives.</title>
        <authorList>
            <person name="Sharpton T.J."/>
            <person name="Stajich J.E."/>
            <person name="Rounsley S.D."/>
            <person name="Gardner M.J."/>
            <person name="Wortman J.R."/>
            <person name="Jordar V.S."/>
            <person name="Maiti R."/>
            <person name="Kodira C.D."/>
            <person name="Neafsey D.E."/>
            <person name="Zeng Q."/>
            <person name="Hung C.-Y."/>
            <person name="McMahan C."/>
            <person name="Muszewska A."/>
            <person name="Grynberg M."/>
            <person name="Mandel M.A."/>
            <person name="Kellner E.M."/>
            <person name="Barker B.M."/>
            <person name="Galgiani J.N."/>
            <person name="Orbach M.J."/>
            <person name="Kirkland T.N."/>
            <person name="Cole G.T."/>
            <person name="Henn M.R."/>
            <person name="Birren B.W."/>
            <person name="Taylor J.W."/>
        </authorList>
    </citation>
    <scope>NUCLEOTIDE SEQUENCE [LARGE SCALE GENOMIC DNA]</scope>
    <source>
        <strain>RS</strain>
    </source>
</reference>
<reference key="2">
    <citation type="journal article" date="2010" name="Genome Res.">
        <title>Population genomic sequencing of Coccidioides fungi reveals recent hybridization and transposon control.</title>
        <authorList>
            <person name="Neafsey D.E."/>
            <person name="Barker B.M."/>
            <person name="Sharpton T.J."/>
            <person name="Stajich J.E."/>
            <person name="Park D.J."/>
            <person name="Whiston E."/>
            <person name="Hung C.-Y."/>
            <person name="McMahan C."/>
            <person name="White J."/>
            <person name="Sykes S."/>
            <person name="Heiman D."/>
            <person name="Young S."/>
            <person name="Zeng Q."/>
            <person name="Abouelleil A."/>
            <person name="Aftuck L."/>
            <person name="Bessette D."/>
            <person name="Brown A."/>
            <person name="FitzGerald M."/>
            <person name="Lui A."/>
            <person name="Macdonald J.P."/>
            <person name="Priest M."/>
            <person name="Orbach M.J."/>
            <person name="Galgiani J.N."/>
            <person name="Kirkland T.N."/>
            <person name="Cole G.T."/>
            <person name="Birren B.W."/>
            <person name="Henn M.R."/>
            <person name="Taylor J.W."/>
            <person name="Rounsley S.D."/>
        </authorList>
    </citation>
    <scope>GENOME REANNOTATION</scope>
    <source>
        <strain>RS</strain>
    </source>
</reference>
<dbReference type="EMBL" id="GG704914">
    <property type="protein sequence ID" value="EAS34017.2"/>
    <property type="status" value="ALT_INIT"/>
    <property type="molecule type" value="Genomic_DNA"/>
</dbReference>
<dbReference type="RefSeq" id="XP_001245600.2">
    <property type="nucleotide sequence ID" value="XM_001245599.2"/>
</dbReference>
<dbReference type="SMR" id="Q1DXC2"/>
<dbReference type="STRING" id="246410.Q1DXC2"/>
<dbReference type="GeneID" id="4564154"/>
<dbReference type="KEGG" id="cim:CIMG_05041"/>
<dbReference type="InParanoid" id="Q1DXC2"/>
<dbReference type="OrthoDB" id="526653at2759"/>
<dbReference type="Proteomes" id="UP000001261">
    <property type="component" value="Unassembled WGS sequence"/>
</dbReference>
<dbReference type="GO" id="GO:0016592">
    <property type="term" value="C:mediator complex"/>
    <property type="evidence" value="ECO:0007669"/>
    <property type="project" value="InterPro"/>
</dbReference>
<dbReference type="GO" id="GO:0003712">
    <property type="term" value="F:transcription coregulator activity"/>
    <property type="evidence" value="ECO:0007669"/>
    <property type="project" value="TreeGrafter"/>
</dbReference>
<dbReference type="GO" id="GO:0006357">
    <property type="term" value="P:regulation of transcription by RNA polymerase II"/>
    <property type="evidence" value="ECO:0007669"/>
    <property type="project" value="TreeGrafter"/>
</dbReference>
<dbReference type="Gene3D" id="6.10.280.10">
    <property type="entry name" value="Mediator complex, subunit Med21"/>
    <property type="match status" value="1"/>
</dbReference>
<dbReference type="InterPro" id="IPR037212">
    <property type="entry name" value="Med7/Med21-like"/>
</dbReference>
<dbReference type="InterPro" id="IPR021384">
    <property type="entry name" value="Mediator_Med21"/>
</dbReference>
<dbReference type="PANTHER" id="PTHR13381:SF0">
    <property type="entry name" value="MEDIATOR OF RNA POLYMERASE II TRANSCRIPTION SUBUNIT 21"/>
    <property type="match status" value="1"/>
</dbReference>
<dbReference type="PANTHER" id="PTHR13381">
    <property type="entry name" value="RNA POLYMERASE II HOLOENZYME COMPONENT SRB7"/>
    <property type="match status" value="1"/>
</dbReference>
<dbReference type="Pfam" id="PF11221">
    <property type="entry name" value="Med21"/>
    <property type="match status" value="1"/>
</dbReference>
<dbReference type="SUPFAM" id="SSF140718">
    <property type="entry name" value="Mediator hinge subcomplex-like"/>
    <property type="match status" value="2"/>
</dbReference>